<gene>
    <name type="ORF">ACYPI008421</name>
</gene>
<comment type="function">
    <text evidence="1">Bifunctional enzyme that catalyzes the enolization of 2,3-diketo-5-methylthiopentyl-1-phosphate (DK-MTP-1-P) into the intermediate 2-hydroxy-3-keto-5-methylthiopentenyl-1-phosphate (HK-MTPenyl-1-P), which is then dephosphorylated to form the acireductone 1,2-dihydroxy-3-keto-5-methylthiopentene (DHK-MTPene).</text>
</comment>
<comment type="catalytic activity">
    <reaction evidence="1">
        <text>5-methylsulfanyl-2,3-dioxopentyl phosphate + H2O = 1,2-dihydroxy-5-(methylsulfanyl)pent-1-en-3-one + phosphate</text>
        <dbReference type="Rhea" id="RHEA:21700"/>
        <dbReference type="ChEBI" id="CHEBI:15377"/>
        <dbReference type="ChEBI" id="CHEBI:43474"/>
        <dbReference type="ChEBI" id="CHEBI:49252"/>
        <dbReference type="ChEBI" id="CHEBI:58828"/>
        <dbReference type="EC" id="3.1.3.77"/>
    </reaction>
</comment>
<comment type="cofactor">
    <cofactor evidence="1">
        <name>Mg(2+)</name>
        <dbReference type="ChEBI" id="CHEBI:18420"/>
    </cofactor>
    <text evidence="1">Binds 1 Mg(2+) ion per subunit.</text>
</comment>
<comment type="pathway">
    <text evidence="1">Amino-acid biosynthesis; L-methionine biosynthesis via salvage pathway; L-methionine from S-methyl-5-thio-alpha-D-ribose 1-phosphate: step 3/6.</text>
</comment>
<comment type="pathway">
    <text evidence="1">Amino-acid biosynthesis; L-methionine biosynthesis via salvage pathway; L-methionine from S-methyl-5-thio-alpha-D-ribose 1-phosphate: step 4/6.</text>
</comment>
<comment type="subunit">
    <text evidence="1">Monomer.</text>
</comment>
<comment type="subcellular location">
    <subcellularLocation>
        <location evidence="1">Cytoplasm</location>
    </subcellularLocation>
    <subcellularLocation>
        <location evidence="1">Nucleus</location>
    </subcellularLocation>
</comment>
<comment type="similarity">
    <text evidence="1">Belongs to the HAD-like hydrolase superfamily. MasA/MtnC family.</text>
</comment>
<protein>
    <recommendedName>
        <fullName evidence="1">Enolase-phosphatase E1</fullName>
        <ecNumber evidence="1">3.1.3.77</ecNumber>
    </recommendedName>
    <alternativeName>
        <fullName evidence="1">2,3-diketo-5-methylthio-1-phosphopentane phosphatase</fullName>
    </alternativeName>
</protein>
<feature type="chain" id="PRO_0000393972" description="Enolase-phosphatase E1">
    <location>
        <begin position="1"/>
        <end position="246"/>
    </location>
</feature>
<feature type="binding site" evidence="1">
    <location>
        <position position="11"/>
    </location>
    <ligand>
        <name>Mg(2+)</name>
        <dbReference type="ChEBI" id="CHEBI:18420"/>
    </ligand>
</feature>
<feature type="binding site" evidence="1">
    <location>
        <position position="13"/>
    </location>
    <ligand>
        <name>Mg(2+)</name>
        <dbReference type="ChEBI" id="CHEBI:18420"/>
    </ligand>
</feature>
<feature type="binding site" evidence="1">
    <location>
        <begin position="140"/>
        <end position="141"/>
    </location>
    <ligand>
        <name>substrate</name>
    </ligand>
</feature>
<feature type="binding site" evidence="1">
    <location>
        <position position="174"/>
    </location>
    <ligand>
        <name>substrate</name>
    </ligand>
</feature>
<feature type="binding site" evidence="1">
    <location>
        <position position="199"/>
    </location>
    <ligand>
        <name>Mg(2+)</name>
        <dbReference type="ChEBI" id="CHEBI:18420"/>
    </ligand>
</feature>
<proteinExistence type="evidence at transcript level"/>
<organism>
    <name type="scientific">Acyrthosiphon pisum</name>
    <name type="common">Pea aphid</name>
    <dbReference type="NCBI Taxonomy" id="7029"/>
    <lineage>
        <taxon>Eukaryota</taxon>
        <taxon>Metazoa</taxon>
        <taxon>Ecdysozoa</taxon>
        <taxon>Arthropoda</taxon>
        <taxon>Hexapoda</taxon>
        <taxon>Insecta</taxon>
        <taxon>Pterygota</taxon>
        <taxon>Neoptera</taxon>
        <taxon>Paraneoptera</taxon>
        <taxon>Hemiptera</taxon>
        <taxon>Sternorrhyncha</taxon>
        <taxon>Aphidomorpha</taxon>
        <taxon>Aphidoidea</taxon>
        <taxon>Aphididae</taxon>
        <taxon>Macrosiphini</taxon>
        <taxon>Acyrthosiphon</taxon>
    </lineage>
</organism>
<accession>C4WUT0</accession>
<name>ENOPH_ACYPI</name>
<keyword id="KW-0028">Amino-acid biosynthesis</keyword>
<keyword id="KW-0963">Cytoplasm</keyword>
<keyword id="KW-0378">Hydrolase</keyword>
<keyword id="KW-0460">Magnesium</keyword>
<keyword id="KW-0479">Metal-binding</keyword>
<keyword id="KW-0486">Methionine biosynthesis</keyword>
<keyword id="KW-0539">Nucleus</keyword>
<keyword id="KW-1185">Reference proteome</keyword>
<reference key="1">
    <citation type="submission" date="2009-06" db="EMBL/GenBank/DDBJ databases">
        <title>A full-length cDNA resource of the pea aphid, Acyrthosiphon pisum.</title>
        <authorList>
            <person name="Shigenobu S."/>
            <person name="Nakabachi A."/>
            <person name="Richards S."/>
        </authorList>
    </citation>
    <scope>NUCLEOTIDE SEQUENCE [LARGE SCALE MRNA]</scope>
    <source>
        <strain>LSR1</strain>
    </source>
</reference>
<dbReference type="EC" id="3.1.3.77" evidence="1"/>
<dbReference type="EMBL" id="AK341202">
    <property type="protein sequence ID" value="BAH71650.1"/>
    <property type="molecule type" value="mRNA"/>
</dbReference>
<dbReference type="SMR" id="C4WUT0"/>
<dbReference type="FunCoup" id="C4WUT0">
    <property type="interactions" value="2122"/>
</dbReference>
<dbReference type="STRING" id="7029.C4WUT0"/>
<dbReference type="EnsemblMetazoa" id="NM_001326660.1">
    <property type="protein sequence ID" value="NP_001313589.1"/>
    <property type="gene ID" value="LOC100167644"/>
</dbReference>
<dbReference type="KEGG" id="api:100167644"/>
<dbReference type="CTD" id="40630"/>
<dbReference type="eggNOG" id="KOG2630">
    <property type="taxonomic scope" value="Eukaryota"/>
</dbReference>
<dbReference type="InParanoid" id="C4WUT0"/>
<dbReference type="OrthoDB" id="272500at2759"/>
<dbReference type="UniPathway" id="UPA00904">
    <property type="reaction ID" value="UER00876"/>
</dbReference>
<dbReference type="UniPathway" id="UPA00904">
    <property type="reaction ID" value="UER00877"/>
</dbReference>
<dbReference type="Proteomes" id="UP000007819">
    <property type="component" value="Chromosome A1"/>
</dbReference>
<dbReference type="GO" id="GO:0005737">
    <property type="term" value="C:cytoplasm"/>
    <property type="evidence" value="ECO:0007669"/>
    <property type="project" value="UniProtKB-SubCell"/>
</dbReference>
<dbReference type="GO" id="GO:0005634">
    <property type="term" value="C:nucleus"/>
    <property type="evidence" value="ECO:0007669"/>
    <property type="project" value="UniProtKB-SubCell"/>
</dbReference>
<dbReference type="GO" id="GO:0043874">
    <property type="term" value="F:acireductone synthase activity"/>
    <property type="evidence" value="ECO:0007669"/>
    <property type="project" value="UniProtKB-EC"/>
</dbReference>
<dbReference type="GO" id="GO:0000287">
    <property type="term" value="F:magnesium ion binding"/>
    <property type="evidence" value="ECO:0007669"/>
    <property type="project" value="UniProtKB-UniRule"/>
</dbReference>
<dbReference type="GO" id="GO:0019509">
    <property type="term" value="P:L-methionine salvage from methylthioadenosine"/>
    <property type="evidence" value="ECO:0007669"/>
    <property type="project" value="UniProtKB-UniRule"/>
</dbReference>
<dbReference type="CDD" id="cd01629">
    <property type="entry name" value="HAD_EP"/>
    <property type="match status" value="1"/>
</dbReference>
<dbReference type="Gene3D" id="1.10.720.60">
    <property type="match status" value="1"/>
</dbReference>
<dbReference type="Gene3D" id="3.40.50.1000">
    <property type="entry name" value="HAD superfamily/HAD-like"/>
    <property type="match status" value="1"/>
</dbReference>
<dbReference type="HAMAP" id="MF_03117">
    <property type="entry name" value="Salvage_MtnC_euk"/>
    <property type="match status" value="1"/>
</dbReference>
<dbReference type="InterPro" id="IPR023943">
    <property type="entry name" value="Enolase-ppase_E1"/>
</dbReference>
<dbReference type="InterPro" id="IPR027511">
    <property type="entry name" value="ENOPH1_eukaryotes"/>
</dbReference>
<dbReference type="InterPro" id="IPR036412">
    <property type="entry name" value="HAD-like_sf"/>
</dbReference>
<dbReference type="InterPro" id="IPR023214">
    <property type="entry name" value="HAD_sf"/>
</dbReference>
<dbReference type="NCBIfam" id="TIGR01691">
    <property type="entry name" value="enolase-ppase"/>
    <property type="match status" value="1"/>
</dbReference>
<dbReference type="PANTHER" id="PTHR20371">
    <property type="entry name" value="ENOLASE-PHOSPHATASE E1"/>
    <property type="match status" value="1"/>
</dbReference>
<dbReference type="PANTHER" id="PTHR20371:SF1">
    <property type="entry name" value="ENOLASE-PHOSPHATASE E1"/>
    <property type="match status" value="1"/>
</dbReference>
<dbReference type="Pfam" id="PF00702">
    <property type="entry name" value="Hydrolase"/>
    <property type="match status" value="1"/>
</dbReference>
<dbReference type="SFLD" id="SFLDG01129">
    <property type="entry name" value="C1.5:_HAD__Beta-PGM__Phosphata"/>
    <property type="match status" value="1"/>
</dbReference>
<dbReference type="SFLD" id="SFLDF00044">
    <property type="entry name" value="enolase-phosphatase"/>
    <property type="match status" value="1"/>
</dbReference>
<dbReference type="SUPFAM" id="SSF56784">
    <property type="entry name" value="HAD-like"/>
    <property type="match status" value="1"/>
</dbReference>
<evidence type="ECO:0000255" key="1">
    <source>
        <dbReference type="HAMAP-Rule" id="MF_03117"/>
    </source>
</evidence>
<sequence>MPVNENVILLDIEGTITSISFVKDTLFPYVTKVLEDYIEKYWDDESFQQDLELLRAQAVIDSNVEGFVPISTGDNAKTSVINNVLWQMTNDKKTTALKQLQGHIWKDGYESGLLRGHLYEDVLPVLNKLTDFGKKIYTYSSGSTKAQEYLFQYSMYGDVSGIFLKYFDTKMGPKGSETSYINIANEINVNCSDILFLTDVVVEAEAAVKAGCNSIFLVRPGNAPLDPEKSSKFRIIKTLDELLETE</sequence>